<dbReference type="EMBL" id="AJ508719">
    <property type="protein sequence ID" value="CAD48488.1"/>
    <property type="molecule type" value="mRNA"/>
</dbReference>
<dbReference type="EMBL" id="BC123736">
    <property type="protein sequence ID" value="AAI23737.1"/>
    <property type="molecule type" value="mRNA"/>
</dbReference>
<dbReference type="RefSeq" id="NP_001001134.1">
    <molecule id="Q8HYW2-1"/>
    <property type="nucleotide sequence ID" value="NM_001001134.1"/>
</dbReference>
<dbReference type="RefSeq" id="XP_005221768.1">
    <molecule id="Q8HYW2-2"/>
    <property type="nucleotide sequence ID" value="XM_005221711.5"/>
</dbReference>
<dbReference type="SMR" id="Q8HYW2"/>
<dbReference type="FunCoup" id="Q8HYW2">
    <property type="interactions" value="56"/>
</dbReference>
<dbReference type="STRING" id="9913.ENSBTAP00000002169"/>
<dbReference type="GlyCosmos" id="Q8HYW2">
    <property type="glycosylation" value="6 sites, No reported glycans"/>
</dbReference>
<dbReference type="GlyGen" id="Q8HYW2">
    <property type="glycosylation" value="6 sites"/>
</dbReference>
<dbReference type="PaxDb" id="9913-ENSBTAP00000002169"/>
<dbReference type="GeneID" id="407132"/>
<dbReference type="KEGG" id="bta:407132"/>
<dbReference type="CTD" id="28232"/>
<dbReference type="VEuPathDB" id="HostDB:ENSBTAG00000001652"/>
<dbReference type="eggNOG" id="KOG3626">
    <property type="taxonomic scope" value="Eukaryota"/>
</dbReference>
<dbReference type="HOGENOM" id="CLU_008954_3_0_1"/>
<dbReference type="InParanoid" id="Q8HYW2"/>
<dbReference type="OMA" id="NINCECQ"/>
<dbReference type="OrthoDB" id="5062115at2759"/>
<dbReference type="TreeFam" id="TF317540"/>
<dbReference type="Reactome" id="R-BTA-879518">
    <property type="pathway name" value="Transport of organic anions"/>
</dbReference>
<dbReference type="Proteomes" id="UP000009136">
    <property type="component" value="Chromosome 21"/>
</dbReference>
<dbReference type="Bgee" id="ENSBTAG00000001652">
    <property type="expression patterns" value="Expressed in cardiac ventricle and 107 other cell types or tissues"/>
</dbReference>
<dbReference type="GO" id="GO:0016324">
    <property type="term" value="C:apical plasma membrane"/>
    <property type="evidence" value="ECO:0007669"/>
    <property type="project" value="UniProtKB-SubCell"/>
</dbReference>
<dbReference type="GO" id="GO:0009925">
    <property type="term" value="C:basal plasma membrane"/>
    <property type="evidence" value="ECO:0000250"/>
    <property type="project" value="UniProtKB"/>
</dbReference>
<dbReference type="GO" id="GO:0016323">
    <property type="term" value="C:basolateral plasma membrane"/>
    <property type="evidence" value="ECO:0000318"/>
    <property type="project" value="GO_Central"/>
</dbReference>
<dbReference type="GO" id="GO:0008514">
    <property type="term" value="F:organic anion transmembrane transporter activity"/>
    <property type="evidence" value="ECO:0000250"/>
    <property type="project" value="UniProtKB"/>
</dbReference>
<dbReference type="GO" id="GO:0015132">
    <property type="term" value="F:prostaglandin transmembrane transporter activity"/>
    <property type="evidence" value="ECO:0000250"/>
    <property type="project" value="UniProtKB"/>
</dbReference>
<dbReference type="GO" id="GO:0015347">
    <property type="term" value="F:sodium-independent organic anion transmembrane transporter activity"/>
    <property type="evidence" value="ECO:0000318"/>
    <property type="project" value="GO_Central"/>
</dbReference>
<dbReference type="GO" id="GO:0006811">
    <property type="term" value="P:monoatomic ion transport"/>
    <property type="evidence" value="ECO:0007669"/>
    <property type="project" value="UniProtKB-KW"/>
</dbReference>
<dbReference type="GO" id="GO:0015732">
    <property type="term" value="P:prostaglandin transport"/>
    <property type="evidence" value="ECO:0000318"/>
    <property type="project" value="GO_Central"/>
</dbReference>
<dbReference type="GO" id="GO:0043252">
    <property type="term" value="P:sodium-independent organic anion transport"/>
    <property type="evidence" value="ECO:0000318"/>
    <property type="project" value="GO_Central"/>
</dbReference>
<dbReference type="CDD" id="cd17402">
    <property type="entry name" value="MFS_SLCO3_OATP3"/>
    <property type="match status" value="1"/>
</dbReference>
<dbReference type="Gene3D" id="3.30.60.30">
    <property type="match status" value="1"/>
</dbReference>
<dbReference type="Gene3D" id="1.20.1250.20">
    <property type="entry name" value="MFS general substrate transporter like domains"/>
    <property type="match status" value="1"/>
</dbReference>
<dbReference type="InterPro" id="IPR002350">
    <property type="entry name" value="Kazal_dom"/>
</dbReference>
<dbReference type="InterPro" id="IPR036058">
    <property type="entry name" value="Kazal_dom_sf"/>
</dbReference>
<dbReference type="InterPro" id="IPR036259">
    <property type="entry name" value="MFS_trans_sf"/>
</dbReference>
<dbReference type="InterPro" id="IPR004156">
    <property type="entry name" value="OATP"/>
</dbReference>
<dbReference type="NCBIfam" id="TIGR00805">
    <property type="entry name" value="oat"/>
    <property type="match status" value="1"/>
</dbReference>
<dbReference type="PANTHER" id="PTHR11388">
    <property type="entry name" value="ORGANIC ANION TRANSPORTER"/>
    <property type="match status" value="1"/>
</dbReference>
<dbReference type="PANTHER" id="PTHR11388:SF86">
    <property type="entry name" value="SOLUTE CARRIER ORGANIC ANION TRANSPORTER FAMILY MEMBER 3A1"/>
    <property type="match status" value="1"/>
</dbReference>
<dbReference type="Pfam" id="PF07648">
    <property type="entry name" value="Kazal_2"/>
    <property type="match status" value="1"/>
</dbReference>
<dbReference type="Pfam" id="PF03137">
    <property type="entry name" value="OATP"/>
    <property type="match status" value="1"/>
</dbReference>
<dbReference type="SUPFAM" id="SSF100895">
    <property type="entry name" value="Kazal-type serine protease inhibitors"/>
    <property type="match status" value="1"/>
</dbReference>
<dbReference type="SUPFAM" id="SSF103473">
    <property type="entry name" value="MFS general substrate transporter"/>
    <property type="match status" value="1"/>
</dbReference>
<dbReference type="PROSITE" id="PS51465">
    <property type="entry name" value="KAZAL_2"/>
    <property type="match status" value="1"/>
</dbReference>
<gene>
    <name type="primary">SLCO3A1</name>
    <name type="synonym">OATP3A1</name>
    <name type="synonym">OATPD</name>
    <name type="synonym">SLC21A11</name>
</gene>
<sequence>MQAKKPGGSSGGGRSGELQGDEAQRNKKKKKKVSCFSNIKIFLVSECALMLAQGTVGAYLVSVLTTLERRFNLQSADVGVIASSFEIGNLALILFVSYFGARGHRPRLIGCGGIVMALGALLSALPEFLTHQYKYEAGEIRWGAEGRDVCAANGSGGDQGPDPDLICRSRTATNMMYLLLIGAQVLLGIGATPVQPLGVSYIDDHVRRKDSSLYIGILFTMLVFGPACGFILGSFCTKIYVDAVFIDTSNLDITPDDPRWIGAWWGGFLLCGALLFFSSVLMFGFPQSLPPHSDPALESEQAMLPEREYERPKPSNGVLRHPLEPDSSASCFQQLRVIPKVTKHLLSNPVFTCIILAACMEIAVVAGFAAFLGKYLEQQFNLTTSSANQLLGMTAIPCACLGIFLGGLLVKKLSLSALGAIRMAMLVNLVSTACYVSFLFLGCDTGPVAGVTVPYGNSSTPGSALDPYSSCNKNCECQTDSFTPVCGADGITYLSACFAGCNSTNLTGCACLMTIPPENATVIPGKCPSPGCQEAFLTFLCVMCVCSMIGAMAQTPSVIILIRTVSPELKSYALGVLFLLLRLLGFIPPPLIFGAGIDSTCLFWSTFCGEQGACALYDNVAYRYLYVSIAIALKSFAFLLYTTTWQCLRKNYKRYIKNHEGGLSTSEFFASTLTLDNLGRDPVPANQTHRTKFIYNLEDHEWCENMESVL</sequence>
<reference key="1">
    <citation type="submission" date="2002-09" db="EMBL/GenBank/DDBJ databases">
        <title>Cloning of a new member of the OATP superfamily from bovine kidney (Oatp 3a1).</title>
        <authorList>
            <person name="Geyer J."/>
            <person name="Petzinger E."/>
        </authorList>
    </citation>
    <scope>NUCLEOTIDE SEQUENCE [MRNA] (ISOFORM 1)</scope>
    <source>
        <tissue>Kidney</tissue>
    </source>
</reference>
<reference key="2">
    <citation type="submission" date="2006-09" db="EMBL/GenBank/DDBJ databases">
        <authorList>
            <consortium name="NIH - Mammalian Gene Collection (MGC) project"/>
        </authorList>
    </citation>
    <scope>NUCLEOTIDE SEQUENCE [LARGE SCALE MRNA] (ISOFORM 2)</scope>
    <source>
        <strain>Hereford</strain>
        <tissue>Hippocampus</tissue>
    </source>
</reference>
<feature type="chain" id="PRO_0000369263" description="Solute carrier organic anion transporter family member 3A1">
    <location>
        <begin position="1"/>
        <end position="710"/>
    </location>
</feature>
<feature type="topological domain" description="Cytoplasmic" evidence="2">
    <location>
        <begin position="1"/>
        <end position="40"/>
    </location>
</feature>
<feature type="transmembrane region" description="Helical; Name=1" evidence="2">
    <location>
        <begin position="41"/>
        <end position="60"/>
    </location>
</feature>
<feature type="topological domain" description="Extracellular" evidence="2">
    <location>
        <begin position="61"/>
        <end position="79"/>
    </location>
</feature>
<feature type="transmembrane region" description="Helical; Name=2" evidence="2">
    <location>
        <begin position="80"/>
        <end position="100"/>
    </location>
</feature>
<feature type="topological domain" description="Cytoplasmic" evidence="2">
    <location>
        <begin position="101"/>
        <end position="106"/>
    </location>
</feature>
<feature type="transmembrane region" description="Helical; Name=3" evidence="2">
    <location>
        <begin position="107"/>
        <end position="131"/>
    </location>
</feature>
<feature type="topological domain" description="Extracellular" evidence="2">
    <location>
        <begin position="132"/>
        <end position="174"/>
    </location>
</feature>
<feature type="transmembrane region" description="Helical; Name=4" evidence="2">
    <location>
        <begin position="175"/>
        <end position="203"/>
    </location>
</feature>
<feature type="topological domain" description="Cytoplasmic" evidence="2">
    <location>
        <begin position="204"/>
        <end position="222"/>
    </location>
</feature>
<feature type="transmembrane region" description="Helical; Name=5" evidence="2">
    <location>
        <begin position="223"/>
        <end position="243"/>
    </location>
</feature>
<feature type="topological domain" description="Extracellular" evidence="2">
    <location>
        <begin position="244"/>
        <end position="261"/>
    </location>
</feature>
<feature type="transmembrane region" description="Helical; Name=6" evidence="2">
    <location>
        <begin position="262"/>
        <end position="286"/>
    </location>
</feature>
<feature type="topological domain" description="Cytoplasmic" evidence="2">
    <location>
        <begin position="287"/>
        <end position="344"/>
    </location>
</feature>
<feature type="transmembrane region" description="Helical; Name=7" evidence="2">
    <location>
        <begin position="345"/>
        <end position="366"/>
    </location>
</feature>
<feature type="topological domain" description="Extracellular" evidence="2">
    <location>
        <begin position="367"/>
        <end position="386"/>
    </location>
</feature>
<feature type="transmembrane region" description="Helical; Name=8" evidence="2">
    <location>
        <begin position="387"/>
        <end position="410"/>
    </location>
</feature>
<feature type="topological domain" description="Cytoplasmic" evidence="2">
    <location>
        <begin position="411"/>
        <end position="414"/>
    </location>
</feature>
<feature type="transmembrane region" description="Helical; Name=9" evidence="2">
    <location>
        <begin position="415"/>
        <end position="438"/>
    </location>
</feature>
<feature type="topological domain" description="Extracellular" evidence="2">
    <location>
        <begin position="439"/>
        <end position="539"/>
    </location>
</feature>
<feature type="transmembrane region" description="Helical; Name=10" evidence="2">
    <location>
        <begin position="540"/>
        <end position="562"/>
    </location>
</feature>
<feature type="topological domain" description="Cytoplasmic" evidence="2">
    <location>
        <begin position="563"/>
        <end position="571"/>
    </location>
</feature>
<feature type="transmembrane region" description="Helical; Name=11" evidence="2">
    <location>
        <begin position="572"/>
        <end position="597"/>
    </location>
</feature>
<feature type="topological domain" description="Extracellular" evidence="2">
    <location>
        <begin position="598"/>
        <end position="630"/>
    </location>
</feature>
<feature type="transmembrane region" description="Helical; Name=12" evidence="2">
    <location>
        <begin position="631"/>
        <end position="648"/>
    </location>
</feature>
<feature type="topological domain" description="Cytoplasmic" evidence="2">
    <location>
        <begin position="649"/>
        <end position="705"/>
    </location>
</feature>
<feature type="domain" description="Kazal-like" evidence="3">
    <location>
        <begin position="465"/>
        <end position="513"/>
    </location>
</feature>
<feature type="region of interest" description="Disordered" evidence="4">
    <location>
        <begin position="1"/>
        <end position="25"/>
    </location>
</feature>
<feature type="modified residue" description="N-acetylmethionine" evidence="1">
    <location>
        <position position="1"/>
    </location>
</feature>
<feature type="glycosylation site" description="N-linked (GlcNAc...) asparagine" evidence="2">
    <location>
        <position position="153"/>
    </location>
</feature>
<feature type="glycosylation site" description="N-linked (GlcNAc...) asparagine" evidence="2">
    <location>
        <position position="381"/>
    </location>
</feature>
<feature type="glycosylation site" description="N-linked (GlcNAc...) asparagine" evidence="2">
    <location>
        <position position="457"/>
    </location>
</feature>
<feature type="glycosylation site" description="N-linked (GlcNAc...) asparagine" evidence="2">
    <location>
        <position position="502"/>
    </location>
</feature>
<feature type="glycosylation site" description="N-linked (GlcNAc...) asparagine" evidence="2">
    <location>
        <position position="505"/>
    </location>
</feature>
<feature type="glycosylation site" description="N-linked (GlcNAc...) asparagine" evidence="2">
    <location>
        <position position="519"/>
    </location>
</feature>
<feature type="disulfide bond" evidence="3">
    <location>
        <begin position="471"/>
        <end position="501"/>
    </location>
</feature>
<feature type="disulfide bond" evidence="3">
    <location>
        <begin position="477"/>
        <end position="497"/>
    </location>
</feature>
<feature type="disulfide bond" evidence="3">
    <location>
        <begin position="486"/>
        <end position="511"/>
    </location>
</feature>
<feature type="splice variant" id="VSP_036845" description="In isoform 2." evidence="5">
    <original>EFFASTLTLDNLGRDPVPANQTHRTK</original>
    <variation>TEYQDIETEKTCPESQSPSEDSFVRS</variation>
    <location>
        <begin position="667"/>
        <end position="692"/>
    </location>
</feature>
<feature type="splice variant" id="VSP_036846" description="In isoform 2." evidence="5">
    <location>
        <begin position="693"/>
        <end position="710"/>
    </location>
</feature>
<proteinExistence type="evidence at transcript level"/>
<comment type="function">
    <text evidence="1 6">Putative organic anion antiporter with apparent broad substrate specificity. Recognizes various substrates including thyroid hormone L-thyroxine, prostanoids such as prostaglandin E1 and E2, bile acids such as taurocholate, glycolate and glycochenodeoxycholate and peptide hormones such as L-arginine vasopressin, likely operating in a tissue-specific manner (By similarity). The transport mechanism, its electrogenicity and potential tissue-specific counterions remain to be elucidated (Probable).</text>
</comment>
<comment type="catalytic activity">
    <reaction evidence="1">
        <text>L-thyroxine(out) = L-thyroxine(in)</text>
        <dbReference type="Rhea" id="RHEA:71819"/>
        <dbReference type="ChEBI" id="CHEBI:58448"/>
    </reaction>
    <physiologicalReaction direction="left-to-right" evidence="1">
        <dbReference type="Rhea" id="RHEA:71820"/>
    </physiologicalReaction>
</comment>
<comment type="catalytic activity">
    <reaction evidence="1">
        <text>prostaglandin E1(out) = prostaglandin E1(in)</text>
        <dbReference type="Rhea" id="RHEA:50980"/>
        <dbReference type="ChEBI" id="CHEBI:57397"/>
    </reaction>
    <physiologicalReaction direction="left-to-right" evidence="1">
        <dbReference type="Rhea" id="RHEA:50981"/>
    </physiologicalReaction>
</comment>
<comment type="catalytic activity">
    <reaction evidence="1">
        <text>prostaglandin E2(out) = prostaglandin E2(in)</text>
        <dbReference type="Rhea" id="RHEA:50984"/>
        <dbReference type="ChEBI" id="CHEBI:606564"/>
    </reaction>
    <physiologicalReaction direction="left-to-right" evidence="1">
        <dbReference type="Rhea" id="RHEA:50985"/>
    </physiologicalReaction>
</comment>
<comment type="catalytic activity">
    <reaction evidence="1">
        <text>prostaglandin F2alpha(out) = prostaglandin F2alpha(in)</text>
        <dbReference type="Rhea" id="RHEA:50988"/>
        <dbReference type="ChEBI" id="CHEBI:57404"/>
    </reaction>
    <physiologicalReaction direction="left-to-right" evidence="1">
        <dbReference type="Rhea" id="RHEA:50989"/>
    </physiologicalReaction>
</comment>
<comment type="catalytic activity">
    <reaction evidence="1">
        <text>(5Z,8Z,11Z,14Z)-eicosatetraenoate(out) = (5Z,8Z,11Z,14Z)-eicosatetraenoate(in)</text>
        <dbReference type="Rhea" id="RHEA:71395"/>
        <dbReference type="ChEBI" id="CHEBI:32395"/>
    </reaction>
    <physiologicalReaction direction="left-to-right" evidence="1">
        <dbReference type="Rhea" id="RHEA:71396"/>
    </physiologicalReaction>
</comment>
<comment type="catalytic activity">
    <reaction evidence="1">
        <text>taurocholate(out) = taurocholate(in)</text>
        <dbReference type="Rhea" id="RHEA:71703"/>
        <dbReference type="ChEBI" id="CHEBI:36257"/>
    </reaction>
    <physiologicalReaction direction="right-to-left" evidence="1">
        <dbReference type="Rhea" id="RHEA:71705"/>
    </physiologicalReaction>
</comment>
<comment type="catalytic activity">
    <reaction evidence="1">
        <text>glycocholate(out) = glycocholate(in)</text>
        <dbReference type="Rhea" id="RHEA:71851"/>
        <dbReference type="ChEBI" id="CHEBI:29746"/>
    </reaction>
    <physiologicalReaction direction="right-to-left" evidence="1">
        <dbReference type="Rhea" id="RHEA:71853"/>
    </physiologicalReaction>
</comment>
<comment type="catalytic activity">
    <reaction evidence="1">
        <text>estrone 3-sulfate(out) = estrone 3-sulfate(in)</text>
        <dbReference type="Rhea" id="RHEA:71835"/>
        <dbReference type="ChEBI" id="CHEBI:60050"/>
    </reaction>
    <physiologicalReaction direction="left-to-right" evidence="1">
        <dbReference type="Rhea" id="RHEA:71836"/>
    </physiologicalReaction>
</comment>
<comment type="catalytic activity">
    <reaction evidence="1">
        <text>argipressin(out) = argipressin(in)</text>
        <dbReference type="Rhea" id="RHEA:75979"/>
        <dbReference type="ChEBI" id="CHEBI:194507"/>
    </reaction>
    <physiologicalReaction direction="left-to-right" evidence="1">
        <dbReference type="Rhea" id="RHEA:75980"/>
    </physiologicalReaction>
</comment>
<comment type="subcellular location">
    <subcellularLocation>
        <location evidence="1">Basolateral cell membrane</location>
        <topology evidence="2">Multi-pass membrane protein</topology>
    </subcellularLocation>
    <subcellularLocation>
        <location evidence="1">Apical cell membrane</location>
        <topology evidence="2">Multi-pass membrane protein</topology>
    </subcellularLocation>
    <subcellularLocation>
        <location evidence="1">Basal cell membrane</location>
        <topology evidence="2">Multi-pass membrane protein</topology>
    </subcellularLocation>
</comment>
<comment type="alternative products">
    <event type="alternative splicing"/>
    <isoform>
        <id>Q8HYW2-1</id>
        <name>1</name>
        <sequence type="displayed"/>
    </isoform>
    <isoform>
        <id>Q8HYW2-2</id>
        <name>2</name>
        <sequence type="described" ref="VSP_036845 VSP_036846"/>
    </isoform>
</comment>
<comment type="similarity">
    <text evidence="6">Belongs to the organo anion transporter (TC 2.A.60) family.</text>
</comment>
<organism>
    <name type="scientific">Bos taurus</name>
    <name type="common">Bovine</name>
    <dbReference type="NCBI Taxonomy" id="9913"/>
    <lineage>
        <taxon>Eukaryota</taxon>
        <taxon>Metazoa</taxon>
        <taxon>Chordata</taxon>
        <taxon>Craniata</taxon>
        <taxon>Vertebrata</taxon>
        <taxon>Euteleostomi</taxon>
        <taxon>Mammalia</taxon>
        <taxon>Eutheria</taxon>
        <taxon>Laurasiatheria</taxon>
        <taxon>Artiodactyla</taxon>
        <taxon>Ruminantia</taxon>
        <taxon>Pecora</taxon>
        <taxon>Bovidae</taxon>
        <taxon>Bovinae</taxon>
        <taxon>Bos</taxon>
    </lineage>
</organism>
<accession>Q8HYW2</accession>
<accession>A4FV49</accession>
<name>SO3A1_BOVIN</name>
<evidence type="ECO:0000250" key="1">
    <source>
        <dbReference type="UniProtKB" id="Q9UIG8"/>
    </source>
</evidence>
<evidence type="ECO:0000255" key="2"/>
<evidence type="ECO:0000255" key="3">
    <source>
        <dbReference type="PROSITE-ProRule" id="PRU00798"/>
    </source>
</evidence>
<evidence type="ECO:0000256" key="4">
    <source>
        <dbReference type="SAM" id="MobiDB-lite"/>
    </source>
</evidence>
<evidence type="ECO:0000303" key="5">
    <source ref="2"/>
</evidence>
<evidence type="ECO:0000305" key="6"/>
<protein>
    <recommendedName>
        <fullName>Solute carrier organic anion transporter family member 3A1</fullName>
    </recommendedName>
    <alternativeName>
        <fullName>Organic anion-transporting polypeptide D</fullName>
        <shortName>OATP-D</shortName>
    </alternativeName>
</protein>
<keyword id="KW-0007">Acetylation</keyword>
<keyword id="KW-0025">Alternative splicing</keyword>
<keyword id="KW-1003">Cell membrane</keyword>
<keyword id="KW-1015">Disulfide bond</keyword>
<keyword id="KW-0325">Glycoprotein</keyword>
<keyword id="KW-0406">Ion transport</keyword>
<keyword id="KW-0472">Membrane</keyword>
<keyword id="KW-1185">Reference proteome</keyword>
<keyword id="KW-0812">Transmembrane</keyword>
<keyword id="KW-1133">Transmembrane helix</keyword>
<keyword id="KW-0813">Transport</keyword>